<name>F169B_MOUSE</name>
<reference key="1">
    <citation type="journal article" date="2004" name="Genome Res.">
        <title>The status, quality, and expansion of the NIH full-length cDNA project: the Mammalian Gene Collection (MGC).</title>
        <authorList>
            <consortium name="The MGC Project Team"/>
        </authorList>
    </citation>
    <scope>NUCLEOTIDE SEQUENCE [LARGE SCALE MRNA]</scope>
    <source>
        <strain>FVB/N</strain>
        <tissue>Liver</tissue>
    </source>
</reference>
<keyword id="KW-1185">Reference proteome</keyword>
<gene>
    <name type="primary">Fam169b</name>
</gene>
<evidence type="ECO:0000256" key="1">
    <source>
        <dbReference type="SAM" id="MobiDB-lite"/>
    </source>
</evidence>
<evidence type="ECO:0000305" key="2"/>
<dbReference type="EMBL" id="BC039209">
    <property type="protein sequence ID" value="AAH39209.1"/>
    <property type="molecule type" value="mRNA"/>
</dbReference>
<dbReference type="EMBL" id="BC039945">
    <property type="protein sequence ID" value="AAH39945.1"/>
    <property type="molecule type" value="mRNA"/>
</dbReference>
<dbReference type="CCDS" id="CCDS85317.1"/>
<dbReference type="RefSeq" id="NP_001013833.1">
    <property type="nucleotide sequence ID" value="NM_001013811.3"/>
</dbReference>
<dbReference type="STRING" id="10090.ENSMUSP00000146700"/>
<dbReference type="iPTMnet" id="Q8CHT6"/>
<dbReference type="PhosphoSitePlus" id="Q8CHT6"/>
<dbReference type="ProteomicsDB" id="271528"/>
<dbReference type="DNASU" id="434197"/>
<dbReference type="Ensembl" id="ENSMUST00000125685.9">
    <property type="protein sequence ID" value="ENSMUSP00000146700.2"/>
    <property type="gene ID" value="ENSMUSG00000074071.13"/>
</dbReference>
<dbReference type="GeneID" id="434197"/>
<dbReference type="KEGG" id="mmu:434197"/>
<dbReference type="UCSC" id="uc009hjf.2">
    <property type="organism name" value="mouse"/>
</dbReference>
<dbReference type="AGR" id="MGI:3644026"/>
<dbReference type="CTD" id="434197"/>
<dbReference type="MGI" id="MGI:3644026">
    <property type="gene designation" value="Fam169b"/>
</dbReference>
<dbReference type="VEuPathDB" id="HostDB:ENSMUSG00000074071"/>
<dbReference type="GeneTree" id="ENSGT00510000048902"/>
<dbReference type="InParanoid" id="Q8CHT6"/>
<dbReference type="OMA" id="SWWPTED"/>
<dbReference type="PhylomeDB" id="Q8CHT6"/>
<dbReference type="BioGRID-ORCS" id="434197">
    <property type="hits" value="1 hit in 17 CRISPR screens"/>
</dbReference>
<dbReference type="ChiTaRS" id="Fam169b">
    <property type="organism name" value="mouse"/>
</dbReference>
<dbReference type="PRO" id="PR:Q8CHT6"/>
<dbReference type="Proteomes" id="UP000000589">
    <property type="component" value="Chromosome 7"/>
</dbReference>
<dbReference type="RNAct" id="Q8CHT6">
    <property type="molecule type" value="protein"/>
</dbReference>
<dbReference type="Bgee" id="ENSMUSG00000074071">
    <property type="expression patterns" value="Expressed in thymus and 49 other cell types or tissues"/>
</dbReference>
<dbReference type="ExpressionAtlas" id="Q8CHT6">
    <property type="expression patterns" value="baseline and differential"/>
</dbReference>
<dbReference type="InterPro" id="IPR029625">
    <property type="entry name" value="FAM169"/>
</dbReference>
<dbReference type="PANTHER" id="PTHR22442">
    <property type="match status" value="1"/>
</dbReference>
<dbReference type="PANTHER" id="PTHR22442:SF4">
    <property type="entry name" value="PROTEIN FAM169BP"/>
    <property type="match status" value="1"/>
</dbReference>
<proteinExistence type="evidence at transcript level"/>
<protein>
    <recommendedName>
        <fullName>Protein FAM169B</fullName>
    </recommendedName>
</protein>
<comment type="similarity">
    <text evidence="2">Belongs to the FAM169 family.</text>
</comment>
<accession>Q8CHT6</accession>
<feature type="chain" id="PRO_0000342880" description="Protein FAM169B">
    <location>
        <begin position="1"/>
        <end position="337"/>
    </location>
</feature>
<feature type="region of interest" description="Disordered" evidence="1">
    <location>
        <begin position="278"/>
        <end position="326"/>
    </location>
</feature>
<feature type="compositionally biased region" description="Polar residues" evidence="1">
    <location>
        <begin position="291"/>
        <end position="306"/>
    </location>
</feature>
<feature type="compositionally biased region" description="Basic and acidic residues" evidence="1">
    <location>
        <begin position="307"/>
        <end position="322"/>
    </location>
</feature>
<organism>
    <name type="scientific">Mus musculus</name>
    <name type="common">Mouse</name>
    <dbReference type="NCBI Taxonomy" id="10090"/>
    <lineage>
        <taxon>Eukaryota</taxon>
        <taxon>Metazoa</taxon>
        <taxon>Chordata</taxon>
        <taxon>Craniata</taxon>
        <taxon>Vertebrata</taxon>
        <taxon>Euteleostomi</taxon>
        <taxon>Mammalia</taxon>
        <taxon>Eutheria</taxon>
        <taxon>Euarchontoglires</taxon>
        <taxon>Glires</taxon>
        <taxon>Rodentia</taxon>
        <taxon>Myomorpha</taxon>
        <taxon>Muroidea</taxon>
        <taxon>Muridae</taxon>
        <taxon>Murinae</taxon>
        <taxon>Mus</taxon>
        <taxon>Mus</taxon>
    </lineage>
</organism>
<sequence length="337" mass="38125">MAVYKEAYPVDILEDDAEGYQAAAEAYYEMLREGAQTSAEVISLSTGEQVRLETSSLCFCTIYRDEPQHKILGLVNPQDTKTVVAVYLKESWWSIEDILRTSDPTREGLMKVQSFGERIVLFVLNVIVFGRLERRLHIDDMFFLPHPAKEQAKILWKDGAAVAFYSVKMKGSLCGDGTGTCYLLPVLDTVFVRRKNRCQGLGTAMLRDFCDTFQGDEALGISCPISPAMYRVLRQFLLTCPGERGRLWEVEPPGAWGQQRVNIWLKVYLQERRLQDGSTVHPKCSEEDTDTPGQASQEDGPTQFNHGESHKEWAVGEPERTQNGRRCAQVCEEARQV</sequence>